<evidence type="ECO:0000255" key="1">
    <source>
        <dbReference type="HAMAP-Rule" id="MF_01713"/>
    </source>
</evidence>
<name>PHNC_PSEPK</name>
<reference key="1">
    <citation type="journal article" date="2002" name="Environ. Microbiol.">
        <title>Complete genome sequence and comparative analysis of the metabolically versatile Pseudomonas putida KT2440.</title>
        <authorList>
            <person name="Nelson K.E."/>
            <person name="Weinel C."/>
            <person name="Paulsen I.T."/>
            <person name="Dodson R.J."/>
            <person name="Hilbert H."/>
            <person name="Martins dos Santos V.A.P."/>
            <person name="Fouts D.E."/>
            <person name="Gill S.R."/>
            <person name="Pop M."/>
            <person name="Holmes M."/>
            <person name="Brinkac L.M."/>
            <person name="Beanan M.J."/>
            <person name="DeBoy R.T."/>
            <person name="Daugherty S.C."/>
            <person name="Kolonay J.F."/>
            <person name="Madupu R."/>
            <person name="Nelson W.C."/>
            <person name="White O."/>
            <person name="Peterson J.D."/>
            <person name="Khouri H.M."/>
            <person name="Hance I."/>
            <person name="Chris Lee P."/>
            <person name="Holtzapple E.K."/>
            <person name="Scanlan D."/>
            <person name="Tran K."/>
            <person name="Moazzez A."/>
            <person name="Utterback T.R."/>
            <person name="Rizzo M."/>
            <person name="Lee K."/>
            <person name="Kosack D."/>
            <person name="Moestl D."/>
            <person name="Wedler H."/>
            <person name="Lauber J."/>
            <person name="Stjepandic D."/>
            <person name="Hoheisel J."/>
            <person name="Straetz M."/>
            <person name="Heim S."/>
            <person name="Kiewitz C."/>
            <person name="Eisen J.A."/>
            <person name="Timmis K.N."/>
            <person name="Duesterhoeft A."/>
            <person name="Tuemmler B."/>
            <person name="Fraser C.M."/>
        </authorList>
    </citation>
    <scope>NUCLEOTIDE SEQUENCE [LARGE SCALE GENOMIC DNA]</scope>
    <source>
        <strain>ATCC 47054 / DSM 6125 / CFBP 8728 / NCIMB 11950 / KT2440</strain>
    </source>
</reference>
<accession>Q88PM5</accession>
<protein>
    <recommendedName>
        <fullName evidence="1">Phosphonates import ATP-binding protein PhnC</fullName>
        <ecNumber evidence="1">7.3.2.2</ecNumber>
    </recommendedName>
</protein>
<proteinExistence type="inferred from homology"/>
<sequence>MTASNAAIHLYGASLRHGQVRALDAVSLRIAQGERVAIIGPSGAGKSSLLHLMATAIQPSSGRLELLGEQPWALSARARQRLRARVGLVHQSPPLPPRQRVVTAVLAGRLGQWGTLRGLLNLLYPSDVPGARQVLAELGLADKLFVQCGQLSGGQLQRVGIARALYQRPQVLLTDEPVSAMDPVLADHSLALLNRHAQATGVTLVASLHAVELALAHFPRVIGIREGQVVFDCPAEAVTEQLLDALYANEQLAPPPTQGPTLTVQIPRC</sequence>
<comment type="function">
    <text evidence="1">Part of the ABC transporter complex PhnCDE involved in phosphonates import. Responsible for energy coupling to the transport system.</text>
</comment>
<comment type="catalytic activity">
    <reaction evidence="1">
        <text>phosphonate(out) + ATP + H2O = phosphonate(in) + ADP + phosphate + H(+)</text>
        <dbReference type="Rhea" id="RHEA:18065"/>
        <dbReference type="ChEBI" id="CHEBI:15377"/>
        <dbReference type="ChEBI" id="CHEBI:15378"/>
        <dbReference type="ChEBI" id="CHEBI:16215"/>
        <dbReference type="ChEBI" id="CHEBI:30616"/>
        <dbReference type="ChEBI" id="CHEBI:43474"/>
        <dbReference type="ChEBI" id="CHEBI:456216"/>
        <dbReference type="EC" id="7.3.2.2"/>
    </reaction>
</comment>
<comment type="subunit">
    <text evidence="1">The complex is composed of two ATP-binding proteins (PhnC), two transmembrane proteins (PhnE) and a solute-binding protein (PhnD).</text>
</comment>
<comment type="subcellular location">
    <subcellularLocation>
        <location evidence="1">Cell inner membrane</location>
        <topology evidence="1">Peripheral membrane protein</topology>
    </subcellularLocation>
</comment>
<comment type="similarity">
    <text evidence="1">Belongs to the ABC transporter superfamily. Phosphonates importer (TC 3.A.1.9.1) family.</text>
</comment>
<organism>
    <name type="scientific">Pseudomonas putida (strain ATCC 47054 / DSM 6125 / CFBP 8728 / NCIMB 11950 / KT2440)</name>
    <dbReference type="NCBI Taxonomy" id="160488"/>
    <lineage>
        <taxon>Bacteria</taxon>
        <taxon>Pseudomonadati</taxon>
        <taxon>Pseudomonadota</taxon>
        <taxon>Gammaproteobacteria</taxon>
        <taxon>Pseudomonadales</taxon>
        <taxon>Pseudomonadaceae</taxon>
        <taxon>Pseudomonas</taxon>
    </lineage>
</organism>
<keyword id="KW-0067">ATP-binding</keyword>
<keyword id="KW-0997">Cell inner membrane</keyword>
<keyword id="KW-1003">Cell membrane</keyword>
<keyword id="KW-0472">Membrane</keyword>
<keyword id="KW-0547">Nucleotide-binding</keyword>
<keyword id="KW-0918">Phosphonate transport</keyword>
<keyword id="KW-1185">Reference proteome</keyword>
<keyword id="KW-1278">Translocase</keyword>
<keyword id="KW-0813">Transport</keyword>
<feature type="chain" id="PRO_0000092720" description="Phosphonates import ATP-binding protein PhnC">
    <location>
        <begin position="1"/>
        <end position="269"/>
    </location>
</feature>
<feature type="domain" description="ABC transporter" evidence="1">
    <location>
        <begin position="8"/>
        <end position="251"/>
    </location>
</feature>
<feature type="binding site" evidence="1">
    <location>
        <begin position="40"/>
        <end position="47"/>
    </location>
    <ligand>
        <name>ATP</name>
        <dbReference type="ChEBI" id="CHEBI:30616"/>
    </ligand>
</feature>
<dbReference type="EC" id="7.3.2.2" evidence="1"/>
<dbReference type="EMBL" id="AE015451">
    <property type="protein sequence ID" value="AAN66450.1"/>
    <property type="molecule type" value="Genomic_DNA"/>
</dbReference>
<dbReference type="RefSeq" id="NP_742986.1">
    <property type="nucleotide sequence ID" value="NC_002947.4"/>
</dbReference>
<dbReference type="RefSeq" id="WP_010952055.1">
    <property type="nucleotide sequence ID" value="NZ_CP169744.1"/>
</dbReference>
<dbReference type="SMR" id="Q88PM5"/>
<dbReference type="STRING" id="160488.PP_0825"/>
<dbReference type="PaxDb" id="160488-PP_0825"/>
<dbReference type="KEGG" id="ppu:PP_0825"/>
<dbReference type="PATRIC" id="fig|160488.4.peg.882"/>
<dbReference type="eggNOG" id="COG3638">
    <property type="taxonomic scope" value="Bacteria"/>
</dbReference>
<dbReference type="HOGENOM" id="CLU_000604_1_22_6"/>
<dbReference type="OrthoDB" id="9802264at2"/>
<dbReference type="PhylomeDB" id="Q88PM5"/>
<dbReference type="BioCyc" id="PPUT160488:G1G01-899-MONOMER"/>
<dbReference type="Proteomes" id="UP000000556">
    <property type="component" value="Chromosome"/>
</dbReference>
<dbReference type="GO" id="GO:0005886">
    <property type="term" value="C:plasma membrane"/>
    <property type="evidence" value="ECO:0007669"/>
    <property type="project" value="UniProtKB-SubCell"/>
</dbReference>
<dbReference type="GO" id="GO:0015416">
    <property type="term" value="F:ABC-type phosphonate transporter activity"/>
    <property type="evidence" value="ECO:0007669"/>
    <property type="project" value="UniProtKB-EC"/>
</dbReference>
<dbReference type="GO" id="GO:0005524">
    <property type="term" value="F:ATP binding"/>
    <property type="evidence" value="ECO:0007669"/>
    <property type="project" value="UniProtKB-KW"/>
</dbReference>
<dbReference type="GO" id="GO:0016887">
    <property type="term" value="F:ATP hydrolysis activity"/>
    <property type="evidence" value="ECO:0007669"/>
    <property type="project" value="InterPro"/>
</dbReference>
<dbReference type="Gene3D" id="3.40.50.300">
    <property type="entry name" value="P-loop containing nucleotide triphosphate hydrolases"/>
    <property type="match status" value="1"/>
</dbReference>
<dbReference type="InterPro" id="IPR003593">
    <property type="entry name" value="AAA+_ATPase"/>
</dbReference>
<dbReference type="InterPro" id="IPR003439">
    <property type="entry name" value="ABC_transporter-like_ATP-bd"/>
</dbReference>
<dbReference type="InterPro" id="IPR017871">
    <property type="entry name" value="ABC_transporter-like_CS"/>
</dbReference>
<dbReference type="InterPro" id="IPR050086">
    <property type="entry name" value="MetN_ABC_transporter-like"/>
</dbReference>
<dbReference type="InterPro" id="IPR027417">
    <property type="entry name" value="P-loop_NTPase"/>
</dbReference>
<dbReference type="PANTHER" id="PTHR43166">
    <property type="entry name" value="AMINO ACID IMPORT ATP-BINDING PROTEIN"/>
    <property type="match status" value="1"/>
</dbReference>
<dbReference type="PANTHER" id="PTHR43166:SF6">
    <property type="entry name" value="PHOSPHONATES IMPORT ATP-BINDING PROTEIN PHNC"/>
    <property type="match status" value="1"/>
</dbReference>
<dbReference type="Pfam" id="PF00005">
    <property type="entry name" value="ABC_tran"/>
    <property type="match status" value="1"/>
</dbReference>
<dbReference type="SMART" id="SM00382">
    <property type="entry name" value="AAA"/>
    <property type="match status" value="1"/>
</dbReference>
<dbReference type="SUPFAM" id="SSF52540">
    <property type="entry name" value="P-loop containing nucleoside triphosphate hydrolases"/>
    <property type="match status" value="1"/>
</dbReference>
<dbReference type="PROSITE" id="PS00211">
    <property type="entry name" value="ABC_TRANSPORTER_1"/>
    <property type="match status" value="1"/>
</dbReference>
<dbReference type="PROSITE" id="PS50893">
    <property type="entry name" value="ABC_TRANSPORTER_2"/>
    <property type="match status" value="1"/>
</dbReference>
<dbReference type="PROSITE" id="PS51249">
    <property type="entry name" value="PHNC"/>
    <property type="match status" value="1"/>
</dbReference>
<gene>
    <name evidence="1" type="primary">phnC</name>
    <name type="ordered locus">PP_0825</name>
</gene>